<feature type="chain" id="PRO_0000073098" description="Ovomucoid">
    <location>
        <begin position="1" status="less than"/>
        <end position="56" status="greater than"/>
    </location>
</feature>
<feature type="domain" description="Kazal-like" evidence="1">
    <location>
        <begin position="6"/>
        <end position="56"/>
    </location>
</feature>
<feature type="site" description="Reactive bond 3">
    <location>
        <begin position="18"/>
        <end position="19"/>
    </location>
</feature>
<feature type="glycosylation site" description="N-linked (GlcNAc...) asparagine">
    <location>
        <position position="45"/>
    </location>
</feature>
<feature type="disulfide bond">
    <location>
        <begin position="8"/>
        <end position="38"/>
    </location>
</feature>
<feature type="disulfide bond">
    <location>
        <begin position="16"/>
        <end position="35"/>
    </location>
</feature>
<feature type="disulfide bond">
    <location>
        <begin position="24"/>
        <end position="56"/>
    </location>
</feature>
<feature type="sequence variant">
    <original>L</original>
    <variation>S</variation>
    <location>
        <position position="18"/>
    </location>
</feature>
<feature type="non-terminal residue">
    <location>
        <position position="1"/>
    </location>
</feature>
<feature type="non-terminal residue">
    <location>
        <position position="56"/>
    </location>
</feature>
<keyword id="KW-0903">Direct protein sequencing</keyword>
<keyword id="KW-1015">Disulfide bond</keyword>
<keyword id="KW-0325">Glycoprotein</keyword>
<keyword id="KW-0646">Protease inhibitor</keyword>
<keyword id="KW-0677">Repeat</keyword>
<keyword id="KW-0964">Secreted</keyword>
<keyword id="KW-0722">Serine protease inhibitor</keyword>
<accession>P05592</accession>
<reference key="1">
    <citation type="journal article" date="1987" name="Biochemistry">
        <title>Ovomucoid third domains from 100 avian species: isolation, sequences, and hypervariability of enzyme-inhibitor contact residues.</title>
        <authorList>
            <person name="Laskowski M. Jr."/>
            <person name="Kato I."/>
            <person name="Ardelt W."/>
            <person name="Cook J."/>
            <person name="Denton A."/>
            <person name="Empie M.W."/>
            <person name="Kohr W.J."/>
            <person name="Park S.J."/>
            <person name="Parks K."/>
            <person name="Schatzley B.L."/>
            <person name="Schoenberger O.L."/>
            <person name="Tashiro M."/>
            <person name="Vichot G."/>
            <person name="Whatley H.E."/>
            <person name="Wieczorek A."/>
            <person name="Wieczorek M."/>
        </authorList>
    </citation>
    <scope>PROTEIN SEQUENCE</scope>
</reference>
<dbReference type="PIR" id="E31443">
    <property type="entry name" value="E31443"/>
</dbReference>
<dbReference type="PIR" id="F31443">
    <property type="entry name" value="F31443"/>
</dbReference>
<dbReference type="SMR" id="P05592"/>
<dbReference type="GO" id="GO:0005576">
    <property type="term" value="C:extracellular region"/>
    <property type="evidence" value="ECO:0007669"/>
    <property type="project" value="UniProtKB-SubCell"/>
</dbReference>
<dbReference type="GO" id="GO:0004867">
    <property type="term" value="F:serine-type endopeptidase inhibitor activity"/>
    <property type="evidence" value="ECO:0007669"/>
    <property type="project" value="UniProtKB-KW"/>
</dbReference>
<dbReference type="CDD" id="cd00104">
    <property type="entry name" value="KAZAL_FS"/>
    <property type="match status" value="1"/>
</dbReference>
<dbReference type="FunFam" id="3.30.60.30:FF:000037">
    <property type="entry name" value="Ovomucoid"/>
    <property type="match status" value="1"/>
</dbReference>
<dbReference type="Gene3D" id="3.30.60.30">
    <property type="match status" value="1"/>
</dbReference>
<dbReference type="InterPro" id="IPR051597">
    <property type="entry name" value="Bifunctional_prot_inhibitor"/>
</dbReference>
<dbReference type="InterPro" id="IPR002350">
    <property type="entry name" value="Kazal_dom"/>
</dbReference>
<dbReference type="InterPro" id="IPR036058">
    <property type="entry name" value="Kazal_dom_sf"/>
</dbReference>
<dbReference type="InterPro" id="IPR001239">
    <property type="entry name" value="Prot_inh_Kazal-m"/>
</dbReference>
<dbReference type="PANTHER" id="PTHR47729:SF1">
    <property type="entry name" value="OVOMUCOID-LIKE-RELATED"/>
    <property type="match status" value="1"/>
</dbReference>
<dbReference type="PANTHER" id="PTHR47729">
    <property type="entry name" value="SERINE PEPTIDASE INHIBITOR, KAZAL TYPE 2, TANDEM DUPLICATE 1-RELATED"/>
    <property type="match status" value="1"/>
</dbReference>
<dbReference type="Pfam" id="PF00050">
    <property type="entry name" value="Kazal_1"/>
    <property type="match status" value="1"/>
</dbReference>
<dbReference type="PRINTS" id="PR00290">
    <property type="entry name" value="KAZALINHBTR"/>
</dbReference>
<dbReference type="SMART" id="SM00280">
    <property type="entry name" value="KAZAL"/>
    <property type="match status" value="1"/>
</dbReference>
<dbReference type="SUPFAM" id="SSF100895">
    <property type="entry name" value="Kazal-type serine protease inhibitors"/>
    <property type="match status" value="1"/>
</dbReference>
<dbReference type="PROSITE" id="PS00282">
    <property type="entry name" value="KAZAL_1"/>
    <property type="match status" value="1"/>
</dbReference>
<dbReference type="PROSITE" id="PS51465">
    <property type="entry name" value="KAZAL_2"/>
    <property type="match status" value="1"/>
</dbReference>
<evidence type="ECO:0000255" key="1">
    <source>
        <dbReference type="PROSITE-ProRule" id="PRU00798"/>
    </source>
</evidence>
<sequence>FAAVSVDCSEYPKPACTLEYVPICGSDNKTYGNKCNFCNAVVESNGTLTLSHFGKC</sequence>
<organism>
    <name type="scientific">Cyrtonyx montezumae</name>
    <name type="common">Montezuma quail</name>
    <name type="synonym">Ortyx montezumae</name>
    <dbReference type="NCBI Taxonomy" id="9017"/>
    <lineage>
        <taxon>Eukaryota</taxon>
        <taxon>Metazoa</taxon>
        <taxon>Chordata</taxon>
        <taxon>Craniata</taxon>
        <taxon>Vertebrata</taxon>
        <taxon>Euteleostomi</taxon>
        <taxon>Archelosauria</taxon>
        <taxon>Archosauria</taxon>
        <taxon>Dinosauria</taxon>
        <taxon>Saurischia</taxon>
        <taxon>Theropoda</taxon>
        <taxon>Coelurosauria</taxon>
        <taxon>Aves</taxon>
        <taxon>Neognathae</taxon>
        <taxon>Galloanserae</taxon>
        <taxon>Galliformes</taxon>
        <taxon>Odontophoridae</taxon>
        <taxon>Cyrtonyx</taxon>
    </lineage>
</organism>
<comment type="subcellular location">
    <subcellularLocation>
        <location>Secreted</location>
    </subcellularLocation>
</comment>
<comment type="domain">
    <text>Avian ovomucoid consists of three homologous, tandem Kazal family inhibitory domains.</text>
</comment>
<protein>
    <recommendedName>
        <fullName>Ovomucoid</fullName>
    </recommendedName>
</protein>
<proteinExistence type="evidence at protein level"/>
<name>IOVO_CYRMO</name>